<keyword id="KW-0028">Amino-acid biosynthesis</keyword>
<keyword id="KW-0100">Branched-chain amino acid biosynthesis</keyword>
<keyword id="KW-0460">Magnesium</keyword>
<keyword id="KW-0479">Metal-binding</keyword>
<keyword id="KW-0521">NADP</keyword>
<keyword id="KW-0560">Oxidoreductase</keyword>
<reference key="1">
    <citation type="submission" date="2008-05" db="EMBL/GenBank/DDBJ databases">
        <title>Complete genome sequence of Clostridium botulinum E3 str. Alaska E43.</title>
        <authorList>
            <person name="Brinkac L.M."/>
            <person name="Brown J.L."/>
            <person name="Bruce D."/>
            <person name="Detter C."/>
            <person name="Munk C."/>
            <person name="Smith L.A."/>
            <person name="Smith T.J."/>
            <person name="Sutton G."/>
            <person name="Brettin T.S."/>
        </authorList>
    </citation>
    <scope>NUCLEOTIDE SEQUENCE [LARGE SCALE GENOMIC DNA]</scope>
    <source>
        <strain>Alaska E43 / Type E3</strain>
    </source>
</reference>
<accession>B2UYT8</accession>
<comment type="function">
    <text evidence="1">Involved in the biosynthesis of branched-chain amino acids (BCAA). Catalyzes an alkyl-migration followed by a ketol-acid reduction of (S)-2-acetolactate (S2AL) to yield (R)-2,3-dihydroxy-isovalerate. In the isomerase reaction, S2AL is rearranged via a Mg-dependent methyl migration to produce 3-hydroxy-3-methyl-2-ketobutyrate (HMKB). In the reductase reaction, this 2-ketoacid undergoes a metal-dependent reduction by NADPH to yield (R)-2,3-dihydroxy-isovalerate.</text>
</comment>
<comment type="catalytic activity">
    <reaction evidence="1">
        <text>(2R)-2,3-dihydroxy-3-methylbutanoate + NADP(+) = (2S)-2-acetolactate + NADPH + H(+)</text>
        <dbReference type="Rhea" id="RHEA:22068"/>
        <dbReference type="ChEBI" id="CHEBI:15378"/>
        <dbReference type="ChEBI" id="CHEBI:49072"/>
        <dbReference type="ChEBI" id="CHEBI:57783"/>
        <dbReference type="ChEBI" id="CHEBI:58349"/>
        <dbReference type="ChEBI" id="CHEBI:58476"/>
        <dbReference type="EC" id="1.1.1.86"/>
    </reaction>
</comment>
<comment type="catalytic activity">
    <reaction evidence="1">
        <text>(2R,3R)-2,3-dihydroxy-3-methylpentanoate + NADP(+) = (S)-2-ethyl-2-hydroxy-3-oxobutanoate + NADPH + H(+)</text>
        <dbReference type="Rhea" id="RHEA:13493"/>
        <dbReference type="ChEBI" id="CHEBI:15378"/>
        <dbReference type="ChEBI" id="CHEBI:49256"/>
        <dbReference type="ChEBI" id="CHEBI:49258"/>
        <dbReference type="ChEBI" id="CHEBI:57783"/>
        <dbReference type="ChEBI" id="CHEBI:58349"/>
        <dbReference type="EC" id="1.1.1.86"/>
    </reaction>
</comment>
<comment type="cofactor">
    <cofactor evidence="1">
        <name>Mg(2+)</name>
        <dbReference type="ChEBI" id="CHEBI:18420"/>
    </cofactor>
    <text evidence="1">Binds 2 magnesium ions per subunit.</text>
</comment>
<comment type="pathway">
    <text evidence="1">Amino-acid biosynthesis; L-isoleucine biosynthesis; L-isoleucine from 2-oxobutanoate: step 2/4.</text>
</comment>
<comment type="pathway">
    <text evidence="1">Amino-acid biosynthesis; L-valine biosynthesis; L-valine from pyruvate: step 2/4.</text>
</comment>
<comment type="similarity">
    <text evidence="1">Belongs to the ketol-acid reductoisomerase family.</text>
</comment>
<protein>
    <recommendedName>
        <fullName evidence="1">Ketol-acid reductoisomerase (NADP(+))</fullName>
        <shortName evidence="1">KARI</shortName>
        <ecNumber evidence="1">1.1.1.86</ecNumber>
    </recommendedName>
    <alternativeName>
        <fullName evidence="1">Acetohydroxy-acid isomeroreductase</fullName>
        <shortName evidence="1">AHIR</shortName>
    </alternativeName>
    <alternativeName>
        <fullName evidence="1">Alpha-keto-beta-hydroxylacyl reductoisomerase</fullName>
    </alternativeName>
    <alternativeName>
        <fullName evidence="1">Ketol-acid reductoisomerase type 1</fullName>
    </alternativeName>
    <alternativeName>
        <fullName evidence="1">Ketol-acid reductoisomerase type I</fullName>
    </alternativeName>
</protein>
<dbReference type="EC" id="1.1.1.86" evidence="1"/>
<dbReference type="EMBL" id="CP001078">
    <property type="protein sequence ID" value="ACD51095.1"/>
    <property type="molecule type" value="Genomic_DNA"/>
</dbReference>
<dbReference type="RefSeq" id="WP_003368863.1">
    <property type="nucleotide sequence ID" value="NC_010723.1"/>
</dbReference>
<dbReference type="SMR" id="B2UYT8"/>
<dbReference type="KEGG" id="cbt:CLH_0308"/>
<dbReference type="HOGENOM" id="CLU_033821_0_1_9"/>
<dbReference type="UniPathway" id="UPA00047">
    <property type="reaction ID" value="UER00056"/>
</dbReference>
<dbReference type="UniPathway" id="UPA00049">
    <property type="reaction ID" value="UER00060"/>
</dbReference>
<dbReference type="GO" id="GO:0005829">
    <property type="term" value="C:cytosol"/>
    <property type="evidence" value="ECO:0007669"/>
    <property type="project" value="TreeGrafter"/>
</dbReference>
<dbReference type="GO" id="GO:0004455">
    <property type="term" value="F:ketol-acid reductoisomerase activity"/>
    <property type="evidence" value="ECO:0007669"/>
    <property type="project" value="UniProtKB-UniRule"/>
</dbReference>
<dbReference type="GO" id="GO:0000287">
    <property type="term" value="F:magnesium ion binding"/>
    <property type="evidence" value="ECO:0007669"/>
    <property type="project" value="UniProtKB-UniRule"/>
</dbReference>
<dbReference type="GO" id="GO:0050661">
    <property type="term" value="F:NADP binding"/>
    <property type="evidence" value="ECO:0007669"/>
    <property type="project" value="InterPro"/>
</dbReference>
<dbReference type="GO" id="GO:0009097">
    <property type="term" value="P:isoleucine biosynthetic process"/>
    <property type="evidence" value="ECO:0007669"/>
    <property type="project" value="UniProtKB-UniRule"/>
</dbReference>
<dbReference type="GO" id="GO:0009099">
    <property type="term" value="P:L-valine biosynthetic process"/>
    <property type="evidence" value="ECO:0007669"/>
    <property type="project" value="UniProtKB-UniRule"/>
</dbReference>
<dbReference type="FunFam" id="3.40.50.720:FF:000023">
    <property type="entry name" value="Ketol-acid reductoisomerase (NADP(+))"/>
    <property type="match status" value="1"/>
</dbReference>
<dbReference type="Gene3D" id="6.10.240.10">
    <property type="match status" value="1"/>
</dbReference>
<dbReference type="Gene3D" id="3.40.50.720">
    <property type="entry name" value="NAD(P)-binding Rossmann-like Domain"/>
    <property type="match status" value="1"/>
</dbReference>
<dbReference type="HAMAP" id="MF_00435">
    <property type="entry name" value="IlvC"/>
    <property type="match status" value="1"/>
</dbReference>
<dbReference type="InterPro" id="IPR008927">
    <property type="entry name" value="6-PGluconate_DH-like_C_sf"/>
</dbReference>
<dbReference type="InterPro" id="IPR013023">
    <property type="entry name" value="KARI"/>
</dbReference>
<dbReference type="InterPro" id="IPR000506">
    <property type="entry name" value="KARI_C"/>
</dbReference>
<dbReference type="InterPro" id="IPR013116">
    <property type="entry name" value="KARI_N"/>
</dbReference>
<dbReference type="InterPro" id="IPR014359">
    <property type="entry name" value="KARI_prok"/>
</dbReference>
<dbReference type="InterPro" id="IPR036291">
    <property type="entry name" value="NAD(P)-bd_dom_sf"/>
</dbReference>
<dbReference type="NCBIfam" id="TIGR00465">
    <property type="entry name" value="ilvC"/>
    <property type="match status" value="1"/>
</dbReference>
<dbReference type="NCBIfam" id="NF004017">
    <property type="entry name" value="PRK05479.1"/>
    <property type="match status" value="1"/>
</dbReference>
<dbReference type="NCBIfam" id="NF009940">
    <property type="entry name" value="PRK13403.1"/>
    <property type="match status" value="1"/>
</dbReference>
<dbReference type="PANTHER" id="PTHR21371">
    <property type="entry name" value="KETOL-ACID REDUCTOISOMERASE, MITOCHONDRIAL"/>
    <property type="match status" value="1"/>
</dbReference>
<dbReference type="PANTHER" id="PTHR21371:SF1">
    <property type="entry name" value="KETOL-ACID REDUCTOISOMERASE, MITOCHONDRIAL"/>
    <property type="match status" value="1"/>
</dbReference>
<dbReference type="Pfam" id="PF01450">
    <property type="entry name" value="KARI_C"/>
    <property type="match status" value="1"/>
</dbReference>
<dbReference type="Pfam" id="PF07991">
    <property type="entry name" value="KARI_N"/>
    <property type="match status" value="1"/>
</dbReference>
<dbReference type="PIRSF" id="PIRSF000116">
    <property type="entry name" value="IlvC_gammaproteo"/>
    <property type="match status" value="1"/>
</dbReference>
<dbReference type="SUPFAM" id="SSF48179">
    <property type="entry name" value="6-phosphogluconate dehydrogenase C-terminal domain-like"/>
    <property type="match status" value="1"/>
</dbReference>
<dbReference type="SUPFAM" id="SSF51735">
    <property type="entry name" value="NAD(P)-binding Rossmann-fold domains"/>
    <property type="match status" value="1"/>
</dbReference>
<dbReference type="PROSITE" id="PS51851">
    <property type="entry name" value="KARI_C"/>
    <property type="match status" value="1"/>
</dbReference>
<dbReference type="PROSITE" id="PS51850">
    <property type="entry name" value="KARI_N"/>
    <property type="match status" value="1"/>
</dbReference>
<proteinExistence type="inferred from homology"/>
<organism>
    <name type="scientific">Clostridium botulinum (strain Alaska E43 / Type E3)</name>
    <dbReference type="NCBI Taxonomy" id="508767"/>
    <lineage>
        <taxon>Bacteria</taxon>
        <taxon>Bacillati</taxon>
        <taxon>Bacillota</taxon>
        <taxon>Clostridia</taxon>
        <taxon>Eubacteriales</taxon>
        <taxon>Clostridiaceae</taxon>
        <taxon>Clostridium</taxon>
    </lineage>
</organism>
<sequence>MTKMYYEKDTDLNLLKGKTIAVIGYGSQGHAHALNAKESGCNVIIGLYEGSKSWGKAEAQGFEVFSTAEAAKKADIIMILINDELQAAMYKKDIEPNLESGNMLMFAHGFNIHFDQITAPKDVDVTMIAPKGPGHTVRSEYQLGKGVPCLVAVHQDATGRALETALAYANAIGGARAGVLETTFRTETETDLFGEQAVLCGGVCALMQAGFETLVEAGYDERNAYFECIHEMKLIVDLIYQSGFAGMRYSVSNTAEYGDYITGSKIITEETKKTMKKILKDIQDGTFAKDFLLDMSEAGGQAHFKAMRKLAAEHKSEAVGSEIRKLYCWNNEDKLINN</sequence>
<gene>
    <name evidence="1" type="primary">ilvC</name>
    <name type="ordered locus">CLH_0308</name>
</gene>
<name>ILVC_CLOBA</name>
<feature type="chain" id="PRO_1000190933" description="Ketol-acid reductoisomerase (NADP(+))">
    <location>
        <begin position="1"/>
        <end position="338"/>
    </location>
</feature>
<feature type="domain" description="KARI N-terminal Rossmann" evidence="2">
    <location>
        <begin position="2"/>
        <end position="182"/>
    </location>
</feature>
<feature type="domain" description="KARI C-terminal knotted" evidence="3">
    <location>
        <begin position="183"/>
        <end position="330"/>
    </location>
</feature>
<feature type="active site" evidence="1">
    <location>
        <position position="108"/>
    </location>
</feature>
<feature type="binding site" evidence="1">
    <location>
        <begin position="25"/>
        <end position="28"/>
    </location>
    <ligand>
        <name>NADP(+)</name>
        <dbReference type="ChEBI" id="CHEBI:58349"/>
    </ligand>
</feature>
<feature type="binding site" evidence="1">
    <location>
        <position position="51"/>
    </location>
    <ligand>
        <name>NADP(+)</name>
        <dbReference type="ChEBI" id="CHEBI:58349"/>
    </ligand>
</feature>
<feature type="binding site" evidence="1">
    <location>
        <position position="53"/>
    </location>
    <ligand>
        <name>NADP(+)</name>
        <dbReference type="ChEBI" id="CHEBI:58349"/>
    </ligand>
</feature>
<feature type="binding site" evidence="1">
    <location>
        <begin position="83"/>
        <end position="86"/>
    </location>
    <ligand>
        <name>NADP(+)</name>
        <dbReference type="ChEBI" id="CHEBI:58349"/>
    </ligand>
</feature>
<feature type="binding site" evidence="1">
    <location>
        <position position="134"/>
    </location>
    <ligand>
        <name>NADP(+)</name>
        <dbReference type="ChEBI" id="CHEBI:58349"/>
    </ligand>
</feature>
<feature type="binding site" evidence="1">
    <location>
        <position position="191"/>
    </location>
    <ligand>
        <name>Mg(2+)</name>
        <dbReference type="ChEBI" id="CHEBI:18420"/>
        <label>1</label>
    </ligand>
</feature>
<feature type="binding site" evidence="1">
    <location>
        <position position="191"/>
    </location>
    <ligand>
        <name>Mg(2+)</name>
        <dbReference type="ChEBI" id="CHEBI:18420"/>
        <label>2</label>
    </ligand>
</feature>
<feature type="binding site" evidence="1">
    <location>
        <position position="195"/>
    </location>
    <ligand>
        <name>Mg(2+)</name>
        <dbReference type="ChEBI" id="CHEBI:18420"/>
        <label>1</label>
    </ligand>
</feature>
<feature type="binding site" evidence="1">
    <location>
        <position position="227"/>
    </location>
    <ligand>
        <name>Mg(2+)</name>
        <dbReference type="ChEBI" id="CHEBI:18420"/>
        <label>2</label>
    </ligand>
</feature>
<feature type="binding site" evidence="1">
    <location>
        <position position="231"/>
    </location>
    <ligand>
        <name>Mg(2+)</name>
        <dbReference type="ChEBI" id="CHEBI:18420"/>
        <label>2</label>
    </ligand>
</feature>
<feature type="binding site" evidence="1">
    <location>
        <position position="252"/>
    </location>
    <ligand>
        <name>substrate</name>
    </ligand>
</feature>
<evidence type="ECO:0000255" key="1">
    <source>
        <dbReference type="HAMAP-Rule" id="MF_00435"/>
    </source>
</evidence>
<evidence type="ECO:0000255" key="2">
    <source>
        <dbReference type="PROSITE-ProRule" id="PRU01197"/>
    </source>
</evidence>
<evidence type="ECO:0000255" key="3">
    <source>
        <dbReference type="PROSITE-ProRule" id="PRU01198"/>
    </source>
</evidence>